<gene>
    <name type="primary">E5</name>
</gene>
<dbReference type="EMBL" id="X56147">
    <property type="protein sequence ID" value="CAA39617.1"/>
    <property type="molecule type" value="Genomic_DNA"/>
</dbReference>
<dbReference type="PIR" id="F43550">
    <property type="entry name" value="W5WL41"/>
</dbReference>
<dbReference type="KEGG" id="vg:1489280"/>
<dbReference type="Proteomes" id="UP000006367">
    <property type="component" value="Genome"/>
</dbReference>
<reference key="1">
    <citation type="journal article" date="1991" name="Virus Res.">
        <title>Nucleotide sequence of human papillomavirus (HPV) type 41: an unusual HPV type without a typical E2 binding site consensus sequence.</title>
        <authorList>
            <person name="Hirt L."/>
            <person name="Hirsch-Behnam A."/>
            <person name="de Villiers E.M."/>
        </authorList>
    </citation>
    <scope>NUCLEOTIDE SEQUENCE [GENOMIC DNA]</scope>
</reference>
<keyword id="KW-0244">Early protein</keyword>
<keyword id="KW-1185">Reference proteome</keyword>
<feature type="chain" id="PRO_0000133295" description="Probable protein E5">
    <location>
        <begin position="1"/>
        <end position="78"/>
    </location>
</feature>
<organismHost>
    <name type="scientific">Homo sapiens</name>
    <name type="common">Human</name>
    <dbReference type="NCBI Taxonomy" id="9606"/>
</organismHost>
<sequence>MKQKEKSSSNLSRFLKTLGCFAHTQKSCDLCIIKQCLLGKGLNALILNNCIRHAKQRGAIVHPMLLNAMSKLHLLIVY</sequence>
<accession>P27554</accession>
<name>VE5_HPV41</name>
<protein>
    <recommendedName>
        <fullName>Probable protein E5</fullName>
    </recommendedName>
</protein>
<proteinExistence type="predicted"/>
<organism>
    <name type="scientific">Human papillomavirus type 41</name>
    <dbReference type="NCBI Taxonomy" id="10589"/>
    <lineage>
        <taxon>Viruses</taxon>
        <taxon>Monodnaviria</taxon>
        <taxon>Shotokuvirae</taxon>
        <taxon>Cossaviricota</taxon>
        <taxon>Papovaviricetes</taxon>
        <taxon>Zurhausenvirales</taxon>
        <taxon>Papillomaviridae</taxon>
        <taxon>Firstpapillomavirinae</taxon>
        <taxon>Nupapillomavirus</taxon>
        <taxon>Nupapillomavirus 1</taxon>
    </lineage>
</organism>